<name>RLMG_PSEAE</name>
<feature type="chain" id="PRO_0000366472" description="Ribosomal RNA large subunit methyltransferase G">
    <location>
        <begin position="1"/>
        <end position="374"/>
    </location>
</feature>
<accession>Q9HVH4</accession>
<sequence length="374" mass="40476">MPLFATPFAQLDLVRQPEQDGEPLQAFDAADEYLLNQLHERGVTAQCRVLVLNDAFGALAASLAPHVQVTSSGDSHLGFLALRKNLARNGLDLGSVRFVPASETAVGPFDHVLVKVPKTLALLEEQLIRLHGQLAPGAQVVAAGMVKHLPRAAGDLLERYIGPMHASLAVKKARLLIAEAAERPQPRSPYPTRYRLEQPPLTLLNHANVFCREGLDIGTRAFLPHLPRSLGALRAADLGCGNGVLGIAYALLNPQAELALVDESYMAVQSARENWRAALGERPATFRADDGLAGQAAGSLDLVLCNPPFHQQQVVGDFLAWRMFLQARDALAAGGELWIVGNRHLGYHAKLKRLFRGVEQVAANPKFVILKAGK</sequence>
<keyword id="KW-0963">Cytoplasm</keyword>
<keyword id="KW-0489">Methyltransferase</keyword>
<keyword id="KW-1185">Reference proteome</keyword>
<keyword id="KW-0698">rRNA processing</keyword>
<keyword id="KW-0949">S-adenosyl-L-methionine</keyword>
<keyword id="KW-0808">Transferase</keyword>
<protein>
    <recommendedName>
        <fullName evidence="1">Ribosomal RNA large subunit methyltransferase G</fullName>
        <ecNumber evidence="1">2.1.1.174</ecNumber>
    </recommendedName>
    <alternativeName>
        <fullName evidence="1">23S rRNA m2G1835 methyltransferase</fullName>
    </alternativeName>
    <alternativeName>
        <fullName evidence="1">rRNA (guanine-N(2)-)-methyltransferase RlmG</fullName>
    </alternativeName>
</protein>
<comment type="function">
    <text evidence="1">Specifically methylates the guanine in position 1835 (m2G1835) of 23S rRNA.</text>
</comment>
<comment type="catalytic activity">
    <reaction evidence="1">
        <text>guanosine(1835) in 23S rRNA + S-adenosyl-L-methionine = N(2)-methylguanosine(1835) in 23S rRNA + S-adenosyl-L-homocysteine + H(+)</text>
        <dbReference type="Rhea" id="RHEA:42744"/>
        <dbReference type="Rhea" id="RHEA-COMP:10217"/>
        <dbReference type="Rhea" id="RHEA-COMP:10218"/>
        <dbReference type="ChEBI" id="CHEBI:15378"/>
        <dbReference type="ChEBI" id="CHEBI:57856"/>
        <dbReference type="ChEBI" id="CHEBI:59789"/>
        <dbReference type="ChEBI" id="CHEBI:74269"/>
        <dbReference type="ChEBI" id="CHEBI:74481"/>
        <dbReference type="EC" id="2.1.1.174"/>
    </reaction>
</comment>
<comment type="subcellular location">
    <subcellularLocation>
        <location evidence="1">Cytoplasm</location>
    </subcellularLocation>
</comment>
<comment type="similarity">
    <text evidence="1">Belongs to the methyltransferase superfamily. RlmG family.</text>
</comment>
<gene>
    <name evidence="1" type="primary">rlmG</name>
    <name type="ordered locus">PA4617</name>
</gene>
<reference key="1">
    <citation type="journal article" date="2000" name="Nature">
        <title>Complete genome sequence of Pseudomonas aeruginosa PAO1, an opportunistic pathogen.</title>
        <authorList>
            <person name="Stover C.K."/>
            <person name="Pham X.-Q.T."/>
            <person name="Erwin A.L."/>
            <person name="Mizoguchi S.D."/>
            <person name="Warrener P."/>
            <person name="Hickey M.J."/>
            <person name="Brinkman F.S.L."/>
            <person name="Hufnagle W.O."/>
            <person name="Kowalik D.J."/>
            <person name="Lagrou M."/>
            <person name="Garber R.L."/>
            <person name="Goltry L."/>
            <person name="Tolentino E."/>
            <person name="Westbrock-Wadman S."/>
            <person name="Yuan Y."/>
            <person name="Brody L.L."/>
            <person name="Coulter S.N."/>
            <person name="Folger K.R."/>
            <person name="Kas A."/>
            <person name="Larbig K."/>
            <person name="Lim R.M."/>
            <person name="Smith K.A."/>
            <person name="Spencer D.H."/>
            <person name="Wong G.K.-S."/>
            <person name="Wu Z."/>
            <person name="Paulsen I.T."/>
            <person name="Reizer J."/>
            <person name="Saier M.H. Jr."/>
            <person name="Hancock R.E.W."/>
            <person name="Lory S."/>
            <person name="Olson M.V."/>
        </authorList>
    </citation>
    <scope>NUCLEOTIDE SEQUENCE [LARGE SCALE GENOMIC DNA]</scope>
    <source>
        <strain>ATCC 15692 / DSM 22644 / CIP 104116 / JCM 14847 / LMG 12228 / 1C / PRS 101 / PAO1</strain>
    </source>
</reference>
<evidence type="ECO:0000255" key="1">
    <source>
        <dbReference type="HAMAP-Rule" id="MF_01859"/>
    </source>
</evidence>
<dbReference type="EC" id="2.1.1.174" evidence="1"/>
<dbReference type="EMBL" id="AE004091">
    <property type="protein sequence ID" value="AAG08005.1"/>
    <property type="molecule type" value="Genomic_DNA"/>
</dbReference>
<dbReference type="PIR" id="A83070">
    <property type="entry name" value="A83070"/>
</dbReference>
<dbReference type="RefSeq" id="NP_253307.1">
    <property type="nucleotide sequence ID" value="NC_002516.2"/>
</dbReference>
<dbReference type="RefSeq" id="WP_003112793.1">
    <property type="nucleotide sequence ID" value="NZ_QZGE01000004.1"/>
</dbReference>
<dbReference type="SMR" id="Q9HVH4"/>
<dbReference type="FunCoup" id="Q9HVH4">
    <property type="interactions" value="69"/>
</dbReference>
<dbReference type="STRING" id="208964.PA4617"/>
<dbReference type="PaxDb" id="208964-PA4617"/>
<dbReference type="DNASU" id="881134"/>
<dbReference type="GeneID" id="881134"/>
<dbReference type="KEGG" id="pae:PA4617"/>
<dbReference type="PATRIC" id="fig|208964.12.peg.4834"/>
<dbReference type="PseudoCAP" id="PA4617"/>
<dbReference type="HOGENOM" id="CLU_040288_4_0_6"/>
<dbReference type="InParanoid" id="Q9HVH4"/>
<dbReference type="OrthoDB" id="29650at2"/>
<dbReference type="PhylomeDB" id="Q9HVH4"/>
<dbReference type="BioCyc" id="PAER208964:G1FZ6-4711-MONOMER"/>
<dbReference type="Proteomes" id="UP000002438">
    <property type="component" value="Chromosome"/>
</dbReference>
<dbReference type="GO" id="GO:0005737">
    <property type="term" value="C:cytoplasm"/>
    <property type="evidence" value="ECO:0007669"/>
    <property type="project" value="UniProtKB-SubCell"/>
</dbReference>
<dbReference type="GO" id="GO:0052916">
    <property type="term" value="F:23S rRNA (guanine(1835)-N(2))-methyltransferase activity"/>
    <property type="evidence" value="ECO:0007669"/>
    <property type="project" value="UniProtKB-EC"/>
</dbReference>
<dbReference type="GO" id="GO:0003676">
    <property type="term" value="F:nucleic acid binding"/>
    <property type="evidence" value="ECO:0007669"/>
    <property type="project" value="InterPro"/>
</dbReference>
<dbReference type="GO" id="GO:0008990">
    <property type="term" value="F:rRNA (guanine-N2-)-methyltransferase activity"/>
    <property type="evidence" value="ECO:0000318"/>
    <property type="project" value="GO_Central"/>
</dbReference>
<dbReference type="GO" id="GO:0070475">
    <property type="term" value="P:rRNA base methylation"/>
    <property type="evidence" value="ECO:0000318"/>
    <property type="project" value="GO_Central"/>
</dbReference>
<dbReference type="CDD" id="cd02440">
    <property type="entry name" value="AdoMet_MTases"/>
    <property type="match status" value="1"/>
</dbReference>
<dbReference type="Gene3D" id="3.40.50.150">
    <property type="entry name" value="Vaccinia Virus protein VP39"/>
    <property type="match status" value="2"/>
</dbReference>
<dbReference type="HAMAP" id="MF_01859">
    <property type="entry name" value="23SrRNA_methyltr_G"/>
    <property type="match status" value="1"/>
</dbReference>
<dbReference type="InterPro" id="IPR002052">
    <property type="entry name" value="DNA_methylase_N6_adenine_CS"/>
</dbReference>
<dbReference type="InterPro" id="IPR017237">
    <property type="entry name" value="rRNA_m2G-MeTrfase_RlmG"/>
</dbReference>
<dbReference type="InterPro" id="IPR046977">
    <property type="entry name" value="RsmC/RlmG"/>
</dbReference>
<dbReference type="InterPro" id="IPR029063">
    <property type="entry name" value="SAM-dependent_MTases_sf"/>
</dbReference>
<dbReference type="InterPro" id="IPR007848">
    <property type="entry name" value="Small_mtfrase_dom"/>
</dbReference>
<dbReference type="PANTHER" id="PTHR47816:SF5">
    <property type="entry name" value="RIBOSOMAL RNA LARGE SUBUNIT METHYLTRANSFERASE G"/>
    <property type="match status" value="1"/>
</dbReference>
<dbReference type="PANTHER" id="PTHR47816">
    <property type="entry name" value="RIBOSOMAL RNA SMALL SUBUNIT METHYLTRANSFERASE C"/>
    <property type="match status" value="1"/>
</dbReference>
<dbReference type="Pfam" id="PF05175">
    <property type="entry name" value="MTS"/>
    <property type="match status" value="1"/>
</dbReference>
<dbReference type="PIRSF" id="PIRSF037565">
    <property type="entry name" value="RRNA_m2G_Mtase_RsmD_prd"/>
    <property type="match status" value="1"/>
</dbReference>
<dbReference type="SUPFAM" id="SSF53335">
    <property type="entry name" value="S-adenosyl-L-methionine-dependent methyltransferases"/>
    <property type="match status" value="2"/>
</dbReference>
<organism>
    <name type="scientific">Pseudomonas aeruginosa (strain ATCC 15692 / DSM 22644 / CIP 104116 / JCM 14847 / LMG 12228 / 1C / PRS 101 / PAO1)</name>
    <dbReference type="NCBI Taxonomy" id="208964"/>
    <lineage>
        <taxon>Bacteria</taxon>
        <taxon>Pseudomonadati</taxon>
        <taxon>Pseudomonadota</taxon>
        <taxon>Gammaproteobacteria</taxon>
        <taxon>Pseudomonadales</taxon>
        <taxon>Pseudomonadaceae</taxon>
        <taxon>Pseudomonas</taxon>
    </lineage>
</organism>
<proteinExistence type="inferred from homology"/>